<keyword id="KW-0240">DNA-directed RNA polymerase</keyword>
<keyword id="KW-0548">Nucleotidyltransferase</keyword>
<keyword id="KW-1185">Reference proteome</keyword>
<keyword id="KW-0804">Transcription</keyword>
<keyword id="KW-0808">Transferase</keyword>
<keyword id="KW-0946">Virion</keyword>
<protein>
    <recommendedName>
        <fullName>Putative DNA directed RNA polymerase subunit R470</fullName>
        <ecNumber>2.7.7.6</ecNumber>
    </recommendedName>
</protein>
<organism>
    <name type="scientific">Acanthamoeba polyphaga mimivirus</name>
    <name type="common">APMV</name>
    <dbReference type="NCBI Taxonomy" id="212035"/>
    <lineage>
        <taxon>Viruses</taxon>
        <taxon>Varidnaviria</taxon>
        <taxon>Bamfordvirae</taxon>
        <taxon>Nucleocytoviricota</taxon>
        <taxon>Megaviricetes</taxon>
        <taxon>Imitervirales</taxon>
        <taxon>Mimiviridae</taxon>
        <taxon>Megamimivirinae</taxon>
        <taxon>Mimivirus</taxon>
        <taxon>Mimivirus bradfordmassiliense</taxon>
    </lineage>
</organism>
<organismHost>
    <name type="scientific">Acanthamoeba polyphaga</name>
    <name type="common">Amoeba</name>
    <dbReference type="NCBI Taxonomy" id="5757"/>
</organismHost>
<dbReference type="EC" id="2.7.7.6"/>
<dbReference type="EMBL" id="AY653733">
    <property type="protein sequence ID" value="AAV50736.1"/>
    <property type="molecule type" value="Genomic_DNA"/>
</dbReference>
<dbReference type="SMR" id="Q5UQD9"/>
<dbReference type="KEGG" id="vg:9925095"/>
<dbReference type="OrthoDB" id="8046at10239"/>
<dbReference type="Proteomes" id="UP000001134">
    <property type="component" value="Genome"/>
</dbReference>
<dbReference type="GO" id="GO:0000428">
    <property type="term" value="C:DNA-directed RNA polymerase complex"/>
    <property type="evidence" value="ECO:0007669"/>
    <property type="project" value="UniProtKB-KW"/>
</dbReference>
<dbReference type="GO" id="GO:0044423">
    <property type="term" value="C:virion component"/>
    <property type="evidence" value="ECO:0007669"/>
    <property type="project" value="UniProtKB-KW"/>
</dbReference>
<dbReference type="GO" id="GO:0003899">
    <property type="term" value="F:DNA-directed RNA polymerase activity"/>
    <property type="evidence" value="ECO:0007669"/>
    <property type="project" value="UniProtKB-EC"/>
</dbReference>
<dbReference type="GO" id="GO:0046983">
    <property type="term" value="F:protein dimerization activity"/>
    <property type="evidence" value="ECO:0007669"/>
    <property type="project" value="InterPro"/>
</dbReference>
<dbReference type="GO" id="GO:0006351">
    <property type="term" value="P:DNA-templated transcription"/>
    <property type="evidence" value="ECO:0007669"/>
    <property type="project" value="InterPro"/>
</dbReference>
<dbReference type="Gene3D" id="3.30.1360.10">
    <property type="entry name" value="RNA polymerase, RBP11-like subunit"/>
    <property type="match status" value="1"/>
</dbReference>
<dbReference type="InterPro" id="IPR036603">
    <property type="entry name" value="RBP11-like"/>
</dbReference>
<dbReference type="InterPro" id="IPR009025">
    <property type="entry name" value="RBP11-like_dimer"/>
</dbReference>
<dbReference type="InterPro" id="IPR036643">
    <property type="entry name" value="RNApol_insert_sf"/>
</dbReference>
<dbReference type="Pfam" id="PF13656">
    <property type="entry name" value="RNA_pol_L_2"/>
    <property type="match status" value="1"/>
</dbReference>
<dbReference type="SUPFAM" id="SSF56553">
    <property type="entry name" value="Insert subdomain of RNA polymerase alpha subunit"/>
    <property type="match status" value="1"/>
</dbReference>
<dbReference type="SUPFAM" id="SSF55257">
    <property type="entry name" value="RBP11-like subunits of RNA polymerase"/>
    <property type="match status" value="2"/>
</dbReference>
<proteinExistence type="evidence at protein level"/>
<feature type="chain" id="PRO_0000253449" description="Putative DNA directed RNA polymerase subunit R470">
    <location>
        <begin position="1"/>
        <end position="357"/>
    </location>
</feature>
<gene>
    <name type="ordered locus">MIMI_R470</name>
</gene>
<reference key="1">
    <citation type="journal article" date="2004" name="Science">
        <title>The 1.2-megabase genome sequence of Mimivirus.</title>
        <authorList>
            <person name="Raoult D."/>
            <person name="Audic S."/>
            <person name="Robert C."/>
            <person name="Abergel C."/>
            <person name="Renesto P."/>
            <person name="Ogata H."/>
            <person name="La Scola B."/>
            <person name="Susan M."/>
            <person name="Claverie J.-M."/>
        </authorList>
    </citation>
    <scope>NUCLEOTIDE SEQUENCE [GENOMIC DNA]</scope>
    <source>
        <strain>Rowbotham-Bradford</strain>
    </source>
</reference>
<reference key="2">
    <citation type="journal article" date="2006" name="J. Virol.">
        <title>Mimivirus giant particles incorporate a large fraction of anonymous and unique gene products.</title>
        <authorList>
            <person name="Renesto P."/>
            <person name="Abergel C."/>
            <person name="Decloquement P."/>
            <person name="Moinier D."/>
            <person name="Azza S."/>
            <person name="Ogata H."/>
            <person name="Fourquet P."/>
            <person name="Gorvel J.-P."/>
            <person name="Claverie J.-M."/>
            <person name="Raoult D."/>
        </authorList>
    </citation>
    <scope>IDENTIFICATION BY MASS SPECTROMETRY [LARGE SCALE ANALYSIS]</scope>
    <scope>SUBCELLULAR LOCATION</scope>
</reference>
<accession>Q5UQD9</accession>
<evidence type="ECO:0000269" key="1">
    <source>
    </source>
</evidence>
<evidence type="ECO:0000305" key="2"/>
<sequence length="357" mass="41630">MSKSKSSRSTDIIDIYAKPDIKLKVLEPRQDRELRVELEGRSINHAIVNAVRRSVMLYVPIYGFHRSNIHIELNKFKNMYNFDLMYNIFETLPIFDVPNFMDLIDPDVYLPVELSKNLFGRFVQEQYTEQSDQEDKLVDATKKLFKIELTLNYKNNTADDKYISSHDCVIKIDGKTSDGYLKRRPICLFVLKPSEEISLRAEANLGIAKNFAAYEATTNAIHEEKNPNKYVITYKTLEQLNKYVILNKACTIIYKKLENLQDYLLRTYTEDRDPTEQIDIELYGEDHTLGTILENVLQQCEYVEKAGYCMPHLLIDKILVSYKLYDDSEIGPIKVLNDCITYLIKLYKQLADLVPKK</sequence>
<name>YR470_MIMIV</name>
<comment type="catalytic activity">
    <reaction>
        <text>RNA(n) + a ribonucleoside 5'-triphosphate = RNA(n+1) + diphosphate</text>
        <dbReference type="Rhea" id="RHEA:21248"/>
        <dbReference type="Rhea" id="RHEA-COMP:14527"/>
        <dbReference type="Rhea" id="RHEA-COMP:17342"/>
        <dbReference type="ChEBI" id="CHEBI:33019"/>
        <dbReference type="ChEBI" id="CHEBI:61557"/>
        <dbReference type="ChEBI" id="CHEBI:140395"/>
        <dbReference type="EC" id="2.7.7.6"/>
    </reaction>
</comment>
<comment type="subcellular location">
    <subcellularLocation>
        <location evidence="1">Virion</location>
    </subcellularLocation>
</comment>
<comment type="similarity">
    <text evidence="2">Belongs to the archaeal Rpo11/eukaryotic RPB11/RPC19 RNA polymerase subunit family.</text>
</comment>